<evidence type="ECO:0000255" key="1">
    <source>
        <dbReference type="HAMAP-Rule" id="MF_00534"/>
    </source>
</evidence>
<dbReference type="EC" id="6.1.1.22" evidence="1"/>
<dbReference type="EMBL" id="CP000668">
    <property type="protein sequence ID" value="ABP40658.1"/>
    <property type="molecule type" value="Genomic_DNA"/>
</dbReference>
<dbReference type="RefSeq" id="WP_002211301.1">
    <property type="nucleotide sequence ID" value="NZ_CP009715.1"/>
</dbReference>
<dbReference type="SMR" id="A4TMZ6"/>
<dbReference type="GeneID" id="96665013"/>
<dbReference type="KEGG" id="ypp:YPDSF_2283"/>
<dbReference type="PATRIC" id="fig|386656.14.peg.3774"/>
<dbReference type="GO" id="GO:0005737">
    <property type="term" value="C:cytoplasm"/>
    <property type="evidence" value="ECO:0007669"/>
    <property type="project" value="UniProtKB-SubCell"/>
</dbReference>
<dbReference type="GO" id="GO:0004816">
    <property type="term" value="F:asparagine-tRNA ligase activity"/>
    <property type="evidence" value="ECO:0007669"/>
    <property type="project" value="UniProtKB-UniRule"/>
</dbReference>
<dbReference type="GO" id="GO:0005524">
    <property type="term" value="F:ATP binding"/>
    <property type="evidence" value="ECO:0007669"/>
    <property type="project" value="UniProtKB-UniRule"/>
</dbReference>
<dbReference type="GO" id="GO:0003676">
    <property type="term" value="F:nucleic acid binding"/>
    <property type="evidence" value="ECO:0007669"/>
    <property type="project" value="InterPro"/>
</dbReference>
<dbReference type="GO" id="GO:0006421">
    <property type="term" value="P:asparaginyl-tRNA aminoacylation"/>
    <property type="evidence" value="ECO:0007669"/>
    <property type="project" value="UniProtKB-UniRule"/>
</dbReference>
<dbReference type="CDD" id="cd00776">
    <property type="entry name" value="AsxRS_core"/>
    <property type="match status" value="1"/>
</dbReference>
<dbReference type="CDD" id="cd04318">
    <property type="entry name" value="EcAsnRS_like_N"/>
    <property type="match status" value="1"/>
</dbReference>
<dbReference type="FunFam" id="3.30.930.10:FF:000016">
    <property type="entry name" value="Asparagine--tRNA ligase"/>
    <property type="match status" value="1"/>
</dbReference>
<dbReference type="Gene3D" id="3.30.930.10">
    <property type="entry name" value="Bira Bifunctional Protein, Domain 2"/>
    <property type="match status" value="1"/>
</dbReference>
<dbReference type="Gene3D" id="2.40.50.140">
    <property type="entry name" value="Nucleic acid-binding proteins"/>
    <property type="match status" value="1"/>
</dbReference>
<dbReference type="HAMAP" id="MF_00534">
    <property type="entry name" value="Asn_tRNA_synth"/>
    <property type="match status" value="1"/>
</dbReference>
<dbReference type="InterPro" id="IPR004364">
    <property type="entry name" value="Aa-tRNA-synt_II"/>
</dbReference>
<dbReference type="InterPro" id="IPR006195">
    <property type="entry name" value="aa-tRNA-synth_II"/>
</dbReference>
<dbReference type="InterPro" id="IPR045864">
    <property type="entry name" value="aa-tRNA-synth_II/BPL/LPL"/>
</dbReference>
<dbReference type="InterPro" id="IPR004522">
    <property type="entry name" value="Asn-tRNA-ligase"/>
</dbReference>
<dbReference type="InterPro" id="IPR002312">
    <property type="entry name" value="Asp/Asn-tRNA-synth_IIb"/>
</dbReference>
<dbReference type="InterPro" id="IPR012340">
    <property type="entry name" value="NA-bd_OB-fold"/>
</dbReference>
<dbReference type="InterPro" id="IPR004365">
    <property type="entry name" value="NA-bd_OB_tRNA"/>
</dbReference>
<dbReference type="NCBIfam" id="TIGR00457">
    <property type="entry name" value="asnS"/>
    <property type="match status" value="1"/>
</dbReference>
<dbReference type="NCBIfam" id="NF003037">
    <property type="entry name" value="PRK03932.1"/>
    <property type="match status" value="1"/>
</dbReference>
<dbReference type="PANTHER" id="PTHR22594:SF34">
    <property type="entry name" value="ASPARAGINE--TRNA LIGASE, MITOCHONDRIAL-RELATED"/>
    <property type="match status" value="1"/>
</dbReference>
<dbReference type="PANTHER" id="PTHR22594">
    <property type="entry name" value="ASPARTYL/LYSYL-TRNA SYNTHETASE"/>
    <property type="match status" value="1"/>
</dbReference>
<dbReference type="Pfam" id="PF00152">
    <property type="entry name" value="tRNA-synt_2"/>
    <property type="match status" value="1"/>
</dbReference>
<dbReference type="Pfam" id="PF01336">
    <property type="entry name" value="tRNA_anti-codon"/>
    <property type="match status" value="1"/>
</dbReference>
<dbReference type="PRINTS" id="PR01042">
    <property type="entry name" value="TRNASYNTHASP"/>
</dbReference>
<dbReference type="SUPFAM" id="SSF55681">
    <property type="entry name" value="Class II aaRS and biotin synthetases"/>
    <property type="match status" value="1"/>
</dbReference>
<dbReference type="SUPFAM" id="SSF50249">
    <property type="entry name" value="Nucleic acid-binding proteins"/>
    <property type="match status" value="1"/>
</dbReference>
<dbReference type="PROSITE" id="PS50862">
    <property type="entry name" value="AA_TRNA_LIGASE_II"/>
    <property type="match status" value="1"/>
</dbReference>
<protein>
    <recommendedName>
        <fullName evidence="1">Asparagine--tRNA ligase</fullName>
        <ecNumber evidence="1">6.1.1.22</ecNumber>
    </recommendedName>
    <alternativeName>
        <fullName evidence="1">Asparaginyl-tRNA synthetase</fullName>
        <shortName evidence="1">AsnRS</shortName>
    </alternativeName>
</protein>
<feature type="chain" id="PRO_1000051462" description="Asparagine--tRNA ligase">
    <location>
        <begin position="1"/>
        <end position="466"/>
    </location>
</feature>
<gene>
    <name evidence="1" type="primary">asnS</name>
    <name type="ordered locus">YPDSF_2283</name>
</gene>
<accession>A4TMZ6</accession>
<sequence length="466" mass="52074">MSVVPVVDVLQGRAAVGSEVTVRGWVRTRRDSKAGISFVAVYDGSCFDPLQAVVNNTLPNYQDEVLHLTTGCSVEVTGTVVASPGEGQSFEIQATAINVVGWVDDPDTYPMAAKRHSIEYLREVAHLRPRTNLIGAVARVRHTLAQAIHRFFDENGYFWVSTPLITASDTEGAGEMFRVSTLDLENLPRTDTGAVDFSEDFFGKEAFLTVSGQLNGETYACALSKVYTFGPTFRAENSNTSRHLAEFWMVEPEVAFASLDDVAGLAEKMLKYVFQAVLNERADDMKFFAERVDKDAVDRLQRFVTSDFAQVDYTDAIEILLASGQKFENDVSWGIDLSSEHERYLAEKHFKAPVVVKNYPKDIKAFYMRMNEDGKTVAAMDVLAPGIGEIIGGSQREERLDVLDARLAEMGLNKEDYWWYRDLRRYGTVPHSGFGLGFERLISYVTGVQNVRDVIPFPRTPRNASF</sequence>
<reference key="1">
    <citation type="submission" date="2007-02" db="EMBL/GenBank/DDBJ databases">
        <title>Complete sequence of chromosome of Yersinia pestis Pestoides F.</title>
        <authorList>
            <consortium name="US DOE Joint Genome Institute"/>
            <person name="Copeland A."/>
            <person name="Lucas S."/>
            <person name="Lapidus A."/>
            <person name="Barry K."/>
            <person name="Detter J.C."/>
            <person name="Glavina del Rio T."/>
            <person name="Hammon N."/>
            <person name="Israni S."/>
            <person name="Dalin E."/>
            <person name="Tice H."/>
            <person name="Pitluck S."/>
            <person name="Di Bartolo G."/>
            <person name="Chain P."/>
            <person name="Malfatti S."/>
            <person name="Shin M."/>
            <person name="Vergez L."/>
            <person name="Schmutz J."/>
            <person name="Larimer F."/>
            <person name="Land M."/>
            <person name="Hauser L."/>
            <person name="Worsham P."/>
            <person name="Chu M."/>
            <person name="Bearden S."/>
            <person name="Garcia E."/>
            <person name="Richardson P."/>
        </authorList>
    </citation>
    <scope>NUCLEOTIDE SEQUENCE [LARGE SCALE GENOMIC DNA]</scope>
    <source>
        <strain>Pestoides F</strain>
    </source>
</reference>
<comment type="catalytic activity">
    <reaction evidence="1">
        <text>tRNA(Asn) + L-asparagine + ATP = L-asparaginyl-tRNA(Asn) + AMP + diphosphate + H(+)</text>
        <dbReference type="Rhea" id="RHEA:11180"/>
        <dbReference type="Rhea" id="RHEA-COMP:9659"/>
        <dbReference type="Rhea" id="RHEA-COMP:9674"/>
        <dbReference type="ChEBI" id="CHEBI:15378"/>
        <dbReference type="ChEBI" id="CHEBI:30616"/>
        <dbReference type="ChEBI" id="CHEBI:33019"/>
        <dbReference type="ChEBI" id="CHEBI:58048"/>
        <dbReference type="ChEBI" id="CHEBI:78442"/>
        <dbReference type="ChEBI" id="CHEBI:78515"/>
        <dbReference type="ChEBI" id="CHEBI:456215"/>
        <dbReference type="EC" id="6.1.1.22"/>
    </reaction>
</comment>
<comment type="subunit">
    <text evidence="1">Homodimer.</text>
</comment>
<comment type="subcellular location">
    <subcellularLocation>
        <location>Cytoplasm</location>
    </subcellularLocation>
</comment>
<comment type="similarity">
    <text evidence="1">Belongs to the class-II aminoacyl-tRNA synthetase family.</text>
</comment>
<keyword id="KW-0030">Aminoacyl-tRNA synthetase</keyword>
<keyword id="KW-0067">ATP-binding</keyword>
<keyword id="KW-0963">Cytoplasm</keyword>
<keyword id="KW-0436">Ligase</keyword>
<keyword id="KW-0547">Nucleotide-binding</keyword>
<keyword id="KW-0648">Protein biosynthesis</keyword>
<name>SYN_YERPP</name>
<organism>
    <name type="scientific">Yersinia pestis (strain Pestoides F)</name>
    <dbReference type="NCBI Taxonomy" id="386656"/>
    <lineage>
        <taxon>Bacteria</taxon>
        <taxon>Pseudomonadati</taxon>
        <taxon>Pseudomonadota</taxon>
        <taxon>Gammaproteobacteria</taxon>
        <taxon>Enterobacterales</taxon>
        <taxon>Yersiniaceae</taxon>
        <taxon>Yersinia</taxon>
    </lineage>
</organism>
<proteinExistence type="inferred from homology"/>